<comment type="function">
    <text evidence="1">Heme chaperone required for the biogenesis of c-type cytochromes. Transiently binds heme delivered by CcmC and transfers the heme to apo-cytochromes in a process facilitated by CcmF and CcmH.</text>
</comment>
<comment type="subcellular location">
    <subcellularLocation>
        <location evidence="1">Cell inner membrane</location>
        <topology evidence="1">Single-pass type II membrane protein</topology>
        <orientation evidence="1">Periplasmic side</orientation>
    </subcellularLocation>
</comment>
<comment type="similarity">
    <text evidence="1">Belongs to the CcmE/CycJ family.</text>
</comment>
<accession>Q3JCJ0</accession>
<evidence type="ECO:0000255" key="1">
    <source>
        <dbReference type="HAMAP-Rule" id="MF_01959"/>
    </source>
</evidence>
<gene>
    <name evidence="1" type="primary">ccmE</name>
    <name evidence="1" type="synonym">cycJ</name>
    <name type="ordered locus">Noc_0944</name>
</gene>
<organism>
    <name type="scientific">Nitrosococcus oceani (strain ATCC 19707 / BCRC 17464 / JCM 30415 / NCIMB 11848 / C-107)</name>
    <dbReference type="NCBI Taxonomy" id="323261"/>
    <lineage>
        <taxon>Bacteria</taxon>
        <taxon>Pseudomonadati</taxon>
        <taxon>Pseudomonadota</taxon>
        <taxon>Gammaproteobacteria</taxon>
        <taxon>Chromatiales</taxon>
        <taxon>Chromatiaceae</taxon>
        <taxon>Nitrosococcus</taxon>
    </lineage>
</organism>
<name>CCME_NITOC</name>
<proteinExistence type="inferred from homology"/>
<keyword id="KW-0997">Cell inner membrane</keyword>
<keyword id="KW-1003">Cell membrane</keyword>
<keyword id="KW-0201">Cytochrome c-type biogenesis</keyword>
<keyword id="KW-0349">Heme</keyword>
<keyword id="KW-0408">Iron</keyword>
<keyword id="KW-0472">Membrane</keyword>
<keyword id="KW-0479">Metal-binding</keyword>
<keyword id="KW-1185">Reference proteome</keyword>
<keyword id="KW-0735">Signal-anchor</keyword>
<keyword id="KW-0812">Transmembrane</keyword>
<keyword id="KW-1133">Transmembrane helix</keyword>
<feature type="chain" id="PRO_0000238825" description="Cytochrome c-type biogenesis protein CcmE">
    <location>
        <begin position="1"/>
        <end position="147"/>
    </location>
</feature>
<feature type="topological domain" description="Cytoplasmic" evidence="1">
    <location>
        <begin position="1"/>
        <end position="7"/>
    </location>
</feature>
<feature type="transmembrane region" description="Helical; Signal-anchor for type II membrane protein" evidence="1">
    <location>
        <begin position="8"/>
        <end position="28"/>
    </location>
</feature>
<feature type="topological domain" description="Periplasmic" evidence="1">
    <location>
        <begin position="29"/>
        <end position="147"/>
    </location>
</feature>
<feature type="binding site" description="covalent" evidence="1">
    <location>
        <position position="123"/>
    </location>
    <ligand>
        <name>heme</name>
        <dbReference type="ChEBI" id="CHEBI:30413"/>
    </ligand>
</feature>
<feature type="binding site" description="axial binding residue" evidence="1">
    <location>
        <position position="127"/>
    </location>
    <ligand>
        <name>heme</name>
        <dbReference type="ChEBI" id="CHEBI:30413"/>
    </ligand>
    <ligandPart>
        <name>Fe</name>
        <dbReference type="ChEBI" id="CHEBI:18248"/>
    </ligandPart>
</feature>
<sequence>MTVRQRRFAMVILVVIGVSIATGLGLKAFQENILFFYNPTQIMAGEVPTDTSIRVGGVVVNGSVKRESGNLDVQFDLTDMAQTVTVVYSGLLPDLFREGQGIVAMGKLGPNKVFEASEVLAKHDEEYMPPEVADSLAKTKANTEDKL</sequence>
<protein>
    <recommendedName>
        <fullName evidence="1">Cytochrome c-type biogenesis protein CcmE</fullName>
    </recommendedName>
    <alternativeName>
        <fullName evidence="1">Cytochrome c maturation protein E</fullName>
    </alternativeName>
    <alternativeName>
        <fullName evidence="1">Heme chaperone CcmE</fullName>
    </alternativeName>
</protein>
<reference key="1">
    <citation type="journal article" date="2006" name="Appl. Environ. Microbiol.">
        <title>Complete genome sequence of the marine, chemolithoautotrophic, ammonia-oxidizing bacterium Nitrosococcus oceani ATCC 19707.</title>
        <authorList>
            <person name="Klotz M.G."/>
            <person name="Arp D.J."/>
            <person name="Chain P.S.G."/>
            <person name="El-Sheikh A.F."/>
            <person name="Hauser L.J."/>
            <person name="Hommes N.G."/>
            <person name="Larimer F.W."/>
            <person name="Malfatti S.A."/>
            <person name="Norton J.M."/>
            <person name="Poret-Peterson A.T."/>
            <person name="Vergez L.M."/>
            <person name="Ward B.B."/>
        </authorList>
    </citation>
    <scope>NUCLEOTIDE SEQUENCE [LARGE SCALE GENOMIC DNA]</scope>
    <source>
        <strain>ATCC 19707 / BCRC 17464 / JCM 30415 / NCIMB 11848 / C-107</strain>
    </source>
</reference>
<dbReference type="EMBL" id="CP000127">
    <property type="protein sequence ID" value="ABA57456.1"/>
    <property type="molecule type" value="Genomic_DNA"/>
</dbReference>
<dbReference type="RefSeq" id="WP_011330520.1">
    <property type="nucleotide sequence ID" value="NC_007484.1"/>
</dbReference>
<dbReference type="SMR" id="Q3JCJ0"/>
<dbReference type="FunCoup" id="Q3JCJ0">
    <property type="interactions" value="34"/>
</dbReference>
<dbReference type="STRING" id="323261.Noc_0944"/>
<dbReference type="KEGG" id="noc:Noc_0944"/>
<dbReference type="eggNOG" id="COG2332">
    <property type="taxonomic scope" value="Bacteria"/>
</dbReference>
<dbReference type="HOGENOM" id="CLU_079503_1_1_6"/>
<dbReference type="InParanoid" id="Q3JCJ0"/>
<dbReference type="Proteomes" id="UP000006838">
    <property type="component" value="Chromosome"/>
</dbReference>
<dbReference type="GO" id="GO:0005886">
    <property type="term" value="C:plasma membrane"/>
    <property type="evidence" value="ECO:0007669"/>
    <property type="project" value="UniProtKB-SubCell"/>
</dbReference>
<dbReference type="GO" id="GO:0020037">
    <property type="term" value="F:heme binding"/>
    <property type="evidence" value="ECO:0007669"/>
    <property type="project" value="InterPro"/>
</dbReference>
<dbReference type="GO" id="GO:0046872">
    <property type="term" value="F:metal ion binding"/>
    <property type="evidence" value="ECO:0007669"/>
    <property type="project" value="UniProtKB-KW"/>
</dbReference>
<dbReference type="GO" id="GO:0017004">
    <property type="term" value="P:cytochrome complex assembly"/>
    <property type="evidence" value="ECO:0007669"/>
    <property type="project" value="UniProtKB-KW"/>
</dbReference>
<dbReference type="FunFam" id="2.40.50.140:FF:000104">
    <property type="entry name" value="Cytochrome c-type biogenesis protein CcmE"/>
    <property type="match status" value="1"/>
</dbReference>
<dbReference type="Gene3D" id="2.40.50.140">
    <property type="entry name" value="Nucleic acid-binding proteins"/>
    <property type="match status" value="1"/>
</dbReference>
<dbReference type="HAMAP" id="MF_01959">
    <property type="entry name" value="CcmE"/>
    <property type="match status" value="1"/>
</dbReference>
<dbReference type="InterPro" id="IPR004329">
    <property type="entry name" value="CcmE"/>
</dbReference>
<dbReference type="InterPro" id="IPR036127">
    <property type="entry name" value="CcmE-like_sf"/>
</dbReference>
<dbReference type="InterPro" id="IPR012340">
    <property type="entry name" value="NA-bd_OB-fold"/>
</dbReference>
<dbReference type="NCBIfam" id="NF009727">
    <property type="entry name" value="PRK13254.1-1"/>
    <property type="match status" value="1"/>
</dbReference>
<dbReference type="NCBIfam" id="NF009729">
    <property type="entry name" value="PRK13254.1-3"/>
    <property type="match status" value="1"/>
</dbReference>
<dbReference type="NCBIfam" id="NF009731">
    <property type="entry name" value="PRK13254.1-5"/>
    <property type="match status" value="1"/>
</dbReference>
<dbReference type="PANTHER" id="PTHR34128">
    <property type="entry name" value="CYTOCHROME C-TYPE BIOGENESIS PROTEIN CCME HOMOLOG, MITOCHONDRIAL"/>
    <property type="match status" value="1"/>
</dbReference>
<dbReference type="PANTHER" id="PTHR34128:SF2">
    <property type="entry name" value="CYTOCHROME C-TYPE BIOGENESIS PROTEIN CCME HOMOLOG, MITOCHONDRIAL"/>
    <property type="match status" value="1"/>
</dbReference>
<dbReference type="Pfam" id="PF03100">
    <property type="entry name" value="CcmE"/>
    <property type="match status" value="1"/>
</dbReference>
<dbReference type="SUPFAM" id="SSF82093">
    <property type="entry name" value="Heme chaperone CcmE"/>
    <property type="match status" value="1"/>
</dbReference>